<proteinExistence type="inferred from homology"/>
<accession>A0A0H3K6Z9</accession>
<reference key="1">
    <citation type="journal article" date="2008" name="J. Bacteriol.">
        <title>Genome sequence of Staphylococcus aureus strain Newman and comparative analysis of staphylococcal genomes: polymorphism and evolution of two major pathogenicity islands.</title>
        <authorList>
            <person name="Baba T."/>
            <person name="Bae T."/>
            <person name="Schneewind O."/>
            <person name="Takeuchi F."/>
            <person name="Hiramatsu K."/>
        </authorList>
    </citation>
    <scope>NUCLEOTIDE SEQUENCE [LARGE SCALE GENOMIC DNA]</scope>
    <source>
        <strain>Newman</strain>
    </source>
</reference>
<keyword id="KW-0964">Secreted</keyword>
<keyword id="KW-0732">Signal</keyword>
<keyword id="KW-0843">Virulence</keyword>
<name>SSL10_STAAE</name>
<feature type="signal peptide" evidence="3">
    <location>
        <begin position="1"/>
        <end position="30"/>
    </location>
</feature>
<feature type="chain" id="PRO_5002613488" description="Staphylococcal superantigen-like 10" evidence="3">
    <location>
        <begin position="31"/>
        <end position="227"/>
    </location>
</feature>
<dbReference type="EMBL" id="AP009351">
    <property type="protein sequence ID" value="BAF66669.1"/>
    <property type="molecule type" value="Genomic_DNA"/>
</dbReference>
<dbReference type="RefSeq" id="WP_000673051.1">
    <property type="nucleotide sequence ID" value="NZ_JBBIAE010000011.1"/>
</dbReference>
<dbReference type="SMR" id="A0A0H3K6Z9"/>
<dbReference type="KEGG" id="sae:NWMN_0397"/>
<dbReference type="HOGENOM" id="CLU_054950_1_0_9"/>
<dbReference type="Proteomes" id="UP000006386">
    <property type="component" value="Chromosome"/>
</dbReference>
<dbReference type="GO" id="GO:0005576">
    <property type="term" value="C:extracellular region"/>
    <property type="evidence" value="ECO:0007669"/>
    <property type="project" value="UniProtKB-SubCell"/>
</dbReference>
<dbReference type="Gene3D" id="2.40.50.110">
    <property type="match status" value="1"/>
</dbReference>
<dbReference type="Gene3D" id="3.10.20.120">
    <property type="match status" value="1"/>
</dbReference>
<dbReference type="InterPro" id="IPR008992">
    <property type="entry name" value="Enterotoxin"/>
</dbReference>
<dbReference type="InterPro" id="IPR015282">
    <property type="entry name" value="SSL_OB"/>
</dbReference>
<dbReference type="InterPro" id="IPR006126">
    <property type="entry name" value="Staph/Strept_toxin_CS"/>
</dbReference>
<dbReference type="InterPro" id="IPR008375">
    <property type="entry name" value="Staph_exotoxin"/>
</dbReference>
<dbReference type="InterPro" id="IPR016091">
    <property type="entry name" value="SuperAg_toxin_C"/>
</dbReference>
<dbReference type="InterPro" id="IPR013307">
    <property type="entry name" value="Superantigen_bac"/>
</dbReference>
<dbReference type="InterPro" id="IPR006123">
    <property type="entry name" value="Toxin_b-grasp_Staph/Strep"/>
</dbReference>
<dbReference type="NCBIfam" id="NF009596">
    <property type="entry name" value="PRK13038.1"/>
    <property type="match status" value="1"/>
</dbReference>
<dbReference type="Pfam" id="PF09199">
    <property type="entry name" value="SSL_OB"/>
    <property type="match status" value="1"/>
</dbReference>
<dbReference type="Pfam" id="PF02876">
    <property type="entry name" value="Stap_Strp_tox_C"/>
    <property type="match status" value="1"/>
</dbReference>
<dbReference type="PRINTS" id="PR01898">
    <property type="entry name" value="SAGSUPRFAMLY"/>
</dbReference>
<dbReference type="PRINTS" id="PR01800">
    <property type="entry name" value="STAPHEXOTOXN"/>
</dbReference>
<dbReference type="PRINTS" id="PR01501">
    <property type="entry name" value="TOXICSSTOXIN"/>
</dbReference>
<dbReference type="SUPFAM" id="SSF50203">
    <property type="entry name" value="Bacterial enterotoxins"/>
    <property type="match status" value="1"/>
</dbReference>
<dbReference type="SUPFAM" id="SSF54334">
    <property type="entry name" value="Superantigen toxins, C-terminal domain"/>
    <property type="match status" value="1"/>
</dbReference>
<dbReference type="PROSITE" id="PS00278">
    <property type="entry name" value="STAPH_STREP_TOXIN_2"/>
    <property type="match status" value="1"/>
</dbReference>
<evidence type="ECO:0000250" key="1">
    <source>
        <dbReference type="UniProtKB" id="Q2G1S8"/>
    </source>
</evidence>
<evidence type="ECO:0000250" key="2">
    <source>
        <dbReference type="UniProtKB" id="Q2G2X7"/>
    </source>
</evidence>
<evidence type="ECO:0000255" key="3"/>
<evidence type="ECO:0000305" key="4"/>
<sequence length="227" mass="26111">MKFTALAKATLALGILTTGTLTTEVHSGHAKQNQKSVNKHDKEALYRYYTGKTMEMKNISALKHGKNNLRFKFRGIKIQVLLPGNDKSKFQQRSYEGLDVFFVQEKRDKHDIFYTVGGVIQNNKTSGVVSAPILNISKEKGEDAFVKGYPYYIKKEKITLKELDYKLRKHLIEKYGLYKTISKDGRVKISLKDGSFYNLDLRSKLKFKYMGEVIESKQIKDIEVNLK</sequence>
<organism>
    <name type="scientific">Staphylococcus aureus (strain Newman)</name>
    <dbReference type="NCBI Taxonomy" id="426430"/>
    <lineage>
        <taxon>Bacteria</taxon>
        <taxon>Bacillati</taxon>
        <taxon>Bacillota</taxon>
        <taxon>Bacilli</taxon>
        <taxon>Bacillales</taxon>
        <taxon>Staphylococcaceae</taxon>
        <taxon>Staphylococcus</taxon>
    </lineage>
</organism>
<gene>
    <name evidence="2" type="primary">ssl10</name>
    <name type="ordered locus">NWMN_0397</name>
</gene>
<protein>
    <recommendedName>
        <fullName evidence="2">Staphylococcal superantigen-like 10</fullName>
    </recommendedName>
</protein>
<comment type="function">
    <text evidence="2">Plays a role in the inhibition of host complement activation via the classical pathway by interacting with the Fc region of human IgG and thereby interfering with the IgG/C1q interaction. Also inhibits the penultimate step of plasma clotting by interacting with prothrombin/F2 and coagulation factor X/F12. Does not affect the protease activity of thrombin but interferes with the conversion of prothrombin to thrombin. Interacts with human receptor CXCR4 and specifically inhibits CXCL12-induced calcium mobilization and cell migration.</text>
</comment>
<comment type="subunit">
    <text evidence="2">Interacts with prothrombin/F2 and coagulation factor X/F12. Interacts with human CXCR4.</text>
</comment>
<comment type="subcellular location">
    <subcellularLocation>
        <location evidence="1">Secreted</location>
    </subcellularLocation>
</comment>
<comment type="similarity">
    <text evidence="4">Belongs to the staphylococcal/streptococcal toxin family.</text>
</comment>